<feature type="signal peptide" evidence="1">
    <location>
        <begin position="1"/>
        <end position="23"/>
    </location>
</feature>
<feature type="chain" id="PRO_0000425079" description="Secreted beta-glucosidase SUN41">
    <location>
        <begin position="24"/>
        <end position="418"/>
    </location>
</feature>
<feature type="region of interest" description="Disordered" evidence="2">
    <location>
        <begin position="81"/>
        <end position="150"/>
    </location>
</feature>
<feature type="compositionally biased region" description="Low complexity" evidence="2">
    <location>
        <begin position="81"/>
        <end position="97"/>
    </location>
</feature>
<feature type="compositionally biased region" description="Polar residues" evidence="2">
    <location>
        <begin position="112"/>
        <end position="126"/>
    </location>
</feature>
<feature type="compositionally biased region" description="Low complexity" evidence="2">
    <location>
        <begin position="127"/>
        <end position="136"/>
    </location>
</feature>
<feature type="glycosylation site" description="N-linked (GlcNAc...) asparagine" evidence="1">
    <location>
        <position position="100"/>
    </location>
</feature>
<organism>
    <name type="scientific">Candida albicans (strain SC5314 / ATCC MYA-2876)</name>
    <name type="common">Yeast</name>
    <dbReference type="NCBI Taxonomy" id="237561"/>
    <lineage>
        <taxon>Eukaryota</taxon>
        <taxon>Fungi</taxon>
        <taxon>Dikarya</taxon>
        <taxon>Ascomycota</taxon>
        <taxon>Saccharomycotina</taxon>
        <taxon>Pichiomycetes</taxon>
        <taxon>Debaryomycetaceae</taxon>
        <taxon>Candida/Lodderomyces clade</taxon>
        <taxon>Candida</taxon>
    </lineage>
</organism>
<evidence type="ECO:0000255" key="1"/>
<evidence type="ECO:0000256" key="2">
    <source>
        <dbReference type="SAM" id="MobiDB-lite"/>
    </source>
</evidence>
<evidence type="ECO:0000269" key="3">
    <source>
    </source>
</evidence>
<evidence type="ECO:0000269" key="4">
    <source>
    </source>
</evidence>
<evidence type="ECO:0000269" key="5">
    <source>
    </source>
</evidence>
<evidence type="ECO:0000269" key="6">
    <source>
    </source>
</evidence>
<evidence type="ECO:0000269" key="7">
    <source>
    </source>
</evidence>
<evidence type="ECO:0000269" key="8">
    <source>
    </source>
</evidence>
<evidence type="ECO:0000269" key="9">
    <source>
    </source>
</evidence>
<evidence type="ECO:0000269" key="10">
    <source>
    </source>
</evidence>
<evidence type="ECO:0000269" key="11">
    <source>
    </source>
</evidence>
<evidence type="ECO:0000269" key="12">
    <source>
    </source>
</evidence>
<evidence type="ECO:0000303" key="13">
    <source>
    </source>
</evidence>
<evidence type="ECO:0000305" key="14"/>
<evidence type="ECO:0000305" key="15">
    <source>
    </source>
</evidence>
<accession>Q59NP5</accession>
<accession>A0A1D8PPG8</accession>
<name>SUN41_CANAL</name>
<gene>
    <name evidence="13" type="primary">SUN41</name>
    <name type="synonym">SUN4</name>
    <name type="ordered locus">CAALFM_C600820WA</name>
    <name type="ORF">CaO19.11124</name>
    <name type="ORF">CaO19.3642</name>
</gene>
<comment type="function">
    <text evidence="6 7 8 12">Cell surface beta-glucosidase involved in cytokinesis, cell wall biogenesis, adhesion to host tissue, and biofilm formation; thus playing an important role in the host-pathogen interaction. Has hydrolytic activity on linear (1-&gt;3)-beta-D-glucans such as laminaribiose and other laminarioligosaccharides.</text>
</comment>
<comment type="biophysicochemical properties">
    <phDependence>
        <text evidence="12">Optimum pH is 5.5.</text>
    </phDependence>
</comment>
<comment type="subcellular location">
    <subcellularLocation>
        <location evidence="11">Secreted</location>
        <location evidence="11">Cell wall</location>
    </subcellularLocation>
    <subcellularLocation>
        <location evidence="7 10">Secreted</location>
    </subcellularLocation>
    <text evidence="7 10">Secreted into the medium of cells growing as blastospores as well as those forming hyphae (PubMed:17905924). Secretion is decreased in cells lacking VPS4 (PubMed:19819358).</text>
</comment>
<comment type="induction">
    <text evidence="3 4 5 9">Strongly up-regulated under hypoxic conditions and in white but not opaque cells (PubMed:16854431, PubMed:19798425). Repressed by exposure to caspofungin (PubMed:15917516). Expression is probably regulated by EFG1 since SUN41 has 9 E-boxes in its promoter (PubMed:12492856).</text>
</comment>
<comment type="PTM">
    <text evidence="15">Predicted to be a substrate for cleavage by KEX2.</text>
</comment>
<comment type="disruption phenotype">
    <text evidence="6 7 8">Leads to increased cell size, cytokinesis defects, altered sensitivity to the cell wall-modifying substance Congo red, defects in adhesion, and reduced biofilm formation.</text>
</comment>
<comment type="similarity">
    <text evidence="14">Belongs to the SUN family.</text>
</comment>
<keyword id="KW-0119">Carbohydrate metabolism</keyword>
<keyword id="KW-0134">Cell wall</keyword>
<keyword id="KW-0961">Cell wall biogenesis/degradation</keyword>
<keyword id="KW-0325">Glycoprotein</keyword>
<keyword id="KW-0326">Glycosidase</keyword>
<keyword id="KW-0378">Hydrolase</keyword>
<keyword id="KW-0624">Polysaccharide degradation</keyword>
<keyword id="KW-1185">Reference proteome</keyword>
<keyword id="KW-0964">Secreted</keyword>
<keyword id="KW-0732">Signal</keyword>
<keyword id="KW-0843">Virulence</keyword>
<sequence length="418" mass="43693">MRFSQATVLAFAALSLAAPAFEADNKNIKREDCDKTSFHGHHKHKRAVAYDYAYVTVTVDGNGNPITTVSPVLSIETIAKSEETSSTSTSISSTTTIVQNDSLTSDEPKTLSLPSGTIKPSSFATESQSQSQSSSTGGSGSGSTNGIEGDLAAFEDPTEEFEDGVLSCSDFPSGQGVIPLDHLGFGGWSGIENSDGSTGGNCKEGSYCSYACQSGMSKTQWPEDQPSNGVSIGGLLCKNGKLYKSSTRSNYLCEWGVKKANVVNKLSETVAICRTDYPGTENMVIPTVVGGGSTSVITVVDQSTYYTWRGGATSAQYYVNNAGVSWEDGCVWGTPGSGVGNWAPLNFGAGYANGIAYLSLIPNPNNRDSLNFKVKIVGESGSTVSGSCSYANGKFNGNSDDGCTVGVTSGEADFVLYN</sequence>
<reference key="1">
    <citation type="journal article" date="2004" name="Proc. Natl. Acad. Sci. U.S.A.">
        <title>The diploid genome sequence of Candida albicans.</title>
        <authorList>
            <person name="Jones T."/>
            <person name="Federspiel N.A."/>
            <person name="Chibana H."/>
            <person name="Dungan J."/>
            <person name="Kalman S."/>
            <person name="Magee B.B."/>
            <person name="Newport G."/>
            <person name="Thorstenson Y.R."/>
            <person name="Agabian N."/>
            <person name="Magee P.T."/>
            <person name="Davis R.W."/>
            <person name="Scherer S."/>
        </authorList>
    </citation>
    <scope>NUCLEOTIDE SEQUENCE [LARGE SCALE GENOMIC DNA]</scope>
    <source>
        <strain>SC5314 / ATCC MYA-2876</strain>
    </source>
</reference>
<reference key="2">
    <citation type="journal article" date="2007" name="Genome Biol.">
        <title>Assembly of the Candida albicans genome into sixteen supercontigs aligned on the eight chromosomes.</title>
        <authorList>
            <person name="van het Hoog M."/>
            <person name="Rast T.J."/>
            <person name="Martchenko M."/>
            <person name="Grindle S."/>
            <person name="Dignard D."/>
            <person name="Hogues H."/>
            <person name="Cuomo C."/>
            <person name="Berriman M."/>
            <person name="Scherer S."/>
            <person name="Magee B.B."/>
            <person name="Whiteway M."/>
            <person name="Chibana H."/>
            <person name="Nantel A."/>
            <person name="Magee P.T."/>
        </authorList>
    </citation>
    <scope>GENOME REANNOTATION</scope>
    <source>
        <strain>SC5314 / ATCC MYA-2876</strain>
    </source>
</reference>
<reference key="3">
    <citation type="journal article" date="2013" name="Genome Biol.">
        <title>Assembly of a phased diploid Candida albicans genome facilitates allele-specific measurements and provides a simple model for repeat and indel structure.</title>
        <authorList>
            <person name="Muzzey D."/>
            <person name="Schwartz K."/>
            <person name="Weissman J.S."/>
            <person name="Sherlock G."/>
        </authorList>
    </citation>
    <scope>NUCLEOTIDE SEQUENCE [LARGE SCALE GENOMIC DNA]</scope>
    <scope>GENOME REANNOTATION</scope>
    <source>
        <strain>SC5314 / ATCC MYA-2876</strain>
    </source>
</reference>
<reference key="4">
    <citation type="journal article" date="2003" name="J. Biol. Chem.">
        <title>Inactivation of Kex2p diminishes the virulence of Candida albicans.</title>
        <authorList>
            <person name="Newport G."/>
            <person name="Kuo A."/>
            <person name="Flattery A."/>
            <person name="Gill C."/>
            <person name="Blake J.J."/>
            <person name="Kurtz M.B."/>
            <person name="Abruzzo G.K."/>
            <person name="Agabian N."/>
        </authorList>
    </citation>
    <scope>PREDICTION AS A SUBSTRATE FOR KEX2 CLEAVAGE</scope>
</reference>
<reference key="5">
    <citation type="journal article" date="2003" name="Mol. Microbiol.">
        <title>EFG1 is a major regulator of cell wall dynamics in Candida albicans as revealed by DNA microarrays.</title>
        <authorList>
            <person name="Sohn K."/>
            <person name="Urban C."/>
            <person name="Brunner H."/>
            <person name="Rupp S."/>
        </authorList>
    </citation>
    <scope>INDUCTION</scope>
</reference>
<reference key="6">
    <citation type="journal article" date="2005" name="Antimicrob. Agents Chemother.">
        <title>Genome-wide expression profiling of the response to azole, polyene, echinocandin, and pyrimidine antifungal agents in Candida albicans.</title>
        <authorList>
            <person name="Liu T.T."/>
            <person name="Lee R.E."/>
            <person name="Barker K.S."/>
            <person name="Lee R.E."/>
            <person name="Wei L."/>
            <person name="Homayouni R."/>
            <person name="Rogers P.D."/>
        </authorList>
    </citation>
    <scope>INDUCTION</scope>
</reference>
<reference key="7">
    <citation type="journal article" date="2006" name="J. Mol. Biol.">
        <title>Transcriptional response of Candida albicans to hypoxia: linkage of oxygen sensing and Efg1p-regulatory networks.</title>
        <authorList>
            <person name="Setiadi E.R."/>
            <person name="Doedt T."/>
            <person name="Cottier F."/>
            <person name="Noffz C."/>
            <person name="Ernst J.F."/>
        </authorList>
    </citation>
    <scope>INDUCTION</scope>
</reference>
<reference key="8">
    <citation type="journal article" date="2007" name="Eukaryot. Cell">
        <title>Requirement for Candida albicans Sun41 in biofilm formation and virulence.</title>
        <authorList>
            <person name="Norice C.T."/>
            <person name="Smith F.J. Jr."/>
            <person name="Solis N."/>
            <person name="Filler S.G."/>
            <person name="Mitchell A.P."/>
        </authorList>
    </citation>
    <scope>DISRUPTION PHENOTYPE</scope>
    <scope>FUNCTION</scope>
</reference>
<reference key="9">
    <citation type="journal article" date="2007" name="Eukaryot. Cell">
        <title>Candida albicans Sun41p, a putative glycosidase, is involved in morphogenesis, cell wall biogenesis, and biofilm formation.</title>
        <authorList>
            <person name="Hiller E."/>
            <person name="Heine S."/>
            <person name="Brunner H."/>
            <person name="Rupp S."/>
        </authorList>
    </citation>
    <scope>DISRUPTION PHENOTYPE</scope>
    <scope>FUNCTION</scope>
    <scope>IDENTIFICATION BY MASS SPECTROMETRY</scope>
    <scope>SUBCELLULAR LOCATION</scope>
</reference>
<reference key="10">
    <citation type="journal article" date="2007" name="Mol. Microbiol.">
        <title>The SUN41 and SUN42 genes are essential for cell separation in Candida albicans.</title>
        <authorList>
            <person name="Firon A."/>
            <person name="Aubert S."/>
            <person name="Iraqui I."/>
            <person name="Guadagnini S."/>
            <person name="Goyard S."/>
            <person name="Prevost M.C."/>
            <person name="Janbon G."/>
            <person name="d'Enfert C."/>
        </authorList>
    </citation>
    <scope>DISRUPTION PHENOTYPE</scope>
    <scope>FUNCTION</scope>
</reference>
<reference key="11">
    <citation type="journal article" date="2009" name="J. Proteomics">
        <title>A proteomic analysis of secretory proteins of a pre-vacuolar mutant of Candida albicans.</title>
        <authorList>
            <person name="Thomas D.P."/>
            <person name="Lopez-Ribot J.L."/>
            <person name="Lee S.A."/>
        </authorList>
    </citation>
    <scope>IDENTIFICATION BY MASS SPECTROMETRY</scope>
    <scope>SUBCELLULAR LOCATION</scope>
</reference>
<reference key="12">
    <citation type="journal article" date="2009" name="PLoS Pathog.">
        <title>Genes selectively up-regulated by pheromone in white cells are involved in biofilm formation in Candida albicans.</title>
        <authorList>
            <person name="Sahni N."/>
            <person name="Yi S."/>
            <person name="Daniels K.J."/>
            <person name="Srikantha T."/>
            <person name="Pujol C."/>
            <person name="Soll D.R."/>
        </authorList>
    </citation>
    <scope>INDUCTION</scope>
</reference>
<reference key="13">
    <citation type="journal article" date="2011" name="Eukaryot. Cell">
        <title>Effects of fluconazole on the secretome, the wall proteome, and wall integrity of the clinical fungus Candida albicans.</title>
        <authorList>
            <person name="Sorgo A.G."/>
            <person name="Heilmann C.J."/>
            <person name="Dekker H.L."/>
            <person name="Bekker M."/>
            <person name="Brul S."/>
            <person name="de Koster C.G."/>
            <person name="de Koning L.J."/>
            <person name="Klis F.M."/>
        </authorList>
    </citation>
    <scope>IDENTIFICATION BY MASS SPECTROMETRY</scope>
    <scope>SUBCELLULAR LOCATION</scope>
</reference>
<reference key="14">
    <citation type="journal article" date="2013" name="J. Biol. Chem.">
        <title>SUN proteins belong to a novel family of beta-(1,3)-glucan-modifying enzymes involved in fungal morphogenesis.</title>
        <authorList>
            <person name="Gastebois A."/>
            <person name="Aimanianda V."/>
            <person name="Bachellier-Bassi S."/>
            <person name="Nesseir A."/>
            <person name="Firon A."/>
            <person name="Beauvais A."/>
            <person name="Schmitt C."/>
            <person name="England P."/>
            <person name="Beau R."/>
            <person name="Prevost M.C."/>
            <person name="d'Enfert C."/>
            <person name="Latge J.P."/>
            <person name="Mouyna I."/>
        </authorList>
    </citation>
    <scope>FUNCTION</scope>
    <scope>CATALYTIC ACTIVITY</scope>
    <scope>BIOPHYSICOCHEMICAL PROPERTIES</scope>
</reference>
<protein>
    <recommendedName>
        <fullName>Secreted beta-glucosidase SUN41</fullName>
        <ecNumber>3.2.1.-</ecNumber>
    </recommendedName>
</protein>
<dbReference type="EC" id="3.2.1.-"/>
<dbReference type="EMBL" id="CP017628">
    <property type="protein sequence ID" value="AOW30028.1"/>
    <property type="molecule type" value="Genomic_DNA"/>
</dbReference>
<dbReference type="RefSeq" id="XP_711315.2">
    <property type="nucleotide sequence ID" value="XM_706223.2"/>
</dbReference>
<dbReference type="BioGRID" id="1230112">
    <property type="interactions" value="3"/>
</dbReference>
<dbReference type="FunCoup" id="Q59NP5">
    <property type="interactions" value="54"/>
</dbReference>
<dbReference type="STRING" id="237561.Q59NP5"/>
<dbReference type="CAZy" id="GH132">
    <property type="family name" value="Glycoside Hydrolase Family 132"/>
</dbReference>
<dbReference type="GlyCosmos" id="Q59NP5">
    <property type="glycosylation" value="1 site, No reported glycans"/>
</dbReference>
<dbReference type="EnsemblFungi" id="C6_00820W_A-T">
    <property type="protein sequence ID" value="C6_00820W_A-T-p1"/>
    <property type="gene ID" value="C6_00820W_A"/>
</dbReference>
<dbReference type="GeneID" id="3647067"/>
<dbReference type="KEGG" id="cal:CAALFM_C600820WA"/>
<dbReference type="CGD" id="CAL0000175157">
    <property type="gene designation" value="SUN41"/>
</dbReference>
<dbReference type="VEuPathDB" id="FungiDB:C6_00820W_A"/>
<dbReference type="HOGENOM" id="CLU_033459_2_0_1"/>
<dbReference type="InParanoid" id="Q59NP5"/>
<dbReference type="OMA" id="CSYACQS"/>
<dbReference type="OrthoDB" id="5339822at2759"/>
<dbReference type="PRO" id="PR:Q59NP5"/>
<dbReference type="Proteomes" id="UP000000559">
    <property type="component" value="Chromosome 6"/>
</dbReference>
<dbReference type="GO" id="GO:0009986">
    <property type="term" value="C:cell surface"/>
    <property type="evidence" value="ECO:0000314"/>
    <property type="project" value="CGD"/>
</dbReference>
<dbReference type="GO" id="GO:0005576">
    <property type="term" value="C:extracellular region"/>
    <property type="evidence" value="ECO:0000314"/>
    <property type="project" value="CGD"/>
</dbReference>
<dbReference type="GO" id="GO:1903561">
    <property type="term" value="C:extracellular vesicle"/>
    <property type="evidence" value="ECO:0000314"/>
    <property type="project" value="CGD"/>
</dbReference>
<dbReference type="GO" id="GO:0062040">
    <property type="term" value="C:fungal biofilm matrix"/>
    <property type="evidence" value="ECO:0000314"/>
    <property type="project" value="CGD"/>
</dbReference>
<dbReference type="GO" id="GO:0009277">
    <property type="term" value="C:fungal-type cell wall"/>
    <property type="evidence" value="ECO:0000318"/>
    <property type="project" value="GO_Central"/>
</dbReference>
<dbReference type="GO" id="GO:0042973">
    <property type="term" value="F:glucan endo-1,3-beta-D-glucosidase activity"/>
    <property type="evidence" value="ECO:0000314"/>
    <property type="project" value="CGD"/>
</dbReference>
<dbReference type="GO" id="GO:0044406">
    <property type="term" value="P:adhesion of symbiont to host"/>
    <property type="evidence" value="ECO:0000315"/>
    <property type="project" value="CGD"/>
</dbReference>
<dbReference type="GO" id="GO:0030447">
    <property type="term" value="P:filamentous growth"/>
    <property type="evidence" value="ECO:0000315"/>
    <property type="project" value="CGD"/>
</dbReference>
<dbReference type="GO" id="GO:0036180">
    <property type="term" value="P:filamentous growth of a population of unicellular organisms in response to biotic stimulus"/>
    <property type="evidence" value="ECO:0000315"/>
    <property type="project" value="CGD"/>
</dbReference>
<dbReference type="GO" id="GO:0031505">
    <property type="term" value="P:fungal-type cell wall organization"/>
    <property type="evidence" value="ECO:0000318"/>
    <property type="project" value="GO_Central"/>
</dbReference>
<dbReference type="GO" id="GO:0000272">
    <property type="term" value="P:polysaccharide catabolic process"/>
    <property type="evidence" value="ECO:0007669"/>
    <property type="project" value="UniProtKB-KW"/>
</dbReference>
<dbReference type="GO" id="GO:0000920">
    <property type="term" value="P:septum digestion after cytokinesis"/>
    <property type="evidence" value="ECO:0000315"/>
    <property type="project" value="CGD"/>
</dbReference>
<dbReference type="GO" id="GO:0044407">
    <property type="term" value="P:single-species biofilm formation in or on host organism"/>
    <property type="evidence" value="ECO:0000315"/>
    <property type="project" value="CGD"/>
</dbReference>
<dbReference type="GO" id="GO:0044011">
    <property type="term" value="P:single-species biofilm formation on inanimate substrate"/>
    <property type="evidence" value="ECO:0000315"/>
    <property type="project" value="CGD"/>
</dbReference>
<dbReference type="InterPro" id="IPR051526">
    <property type="entry name" value="Beta-Glucosidase_SUN"/>
</dbReference>
<dbReference type="InterPro" id="IPR005556">
    <property type="entry name" value="SUN"/>
</dbReference>
<dbReference type="PANTHER" id="PTHR31316">
    <property type="entry name" value="BETA-GLUCOSIDASE-LIKE PROTEIN NCA3, MITOCHONDRIAL-RELATED"/>
    <property type="match status" value="1"/>
</dbReference>
<dbReference type="PANTHER" id="PTHR31316:SF0">
    <property type="entry name" value="SECRETED BETA-GLUCOSIDASE SIM1-RELATED"/>
    <property type="match status" value="1"/>
</dbReference>
<dbReference type="Pfam" id="PF03856">
    <property type="entry name" value="SUN"/>
    <property type="match status" value="1"/>
</dbReference>
<proteinExistence type="evidence at protein level"/>